<name>MTS1A_DANRE</name>
<protein>
    <recommendedName>
        <fullName>Microtubule-associated tumor suppressor 1 homolog A</fullName>
    </recommendedName>
    <alternativeName>
        <fullName>Mitochondrial tumor suppressor 1 homolog A</fullName>
    </alternativeName>
</protein>
<sequence>MFFISKLSLSNIHVRLTAKGLLRNLQLLSGCKLAVGFLAVDKNKSRTNSKNPQPPTNGQPDLVPPESKSRNVEYYKAQCEKKNQTIRQLENTLLSNNRRFEAVAVVIKHLYAEHDEVMKQRRDLSQELVTLREELVSSGHSCERLEQEKEDLRSAFDGVLQKVQEQHRLDLADLEERLKTFYSTEWEKVHQAYQEEADKCKAQMEQQLEEIRSKHEALKKELESSHIEEVDGLKQQFEESFKGFKQSHEKEMQNLNETLKESEETLSNQIQDLMTENDSLKEKLNAEVKRRMELAEKTQDSHTLYLEQELESLKVVLDIKNKQIHEQDKKLMQIDKLMERNVKLDECLKKLQQENEDLKARMDRHAALSRQLSTEQAVLQESLQKESKVNKRLSMENEELLWKLHNGDLNSPRKISPSPSLNLQSPRTSGMFSSPPVSPR</sequence>
<accession>A0JMQ7</accession>
<proteinExistence type="evidence at transcript level"/>
<evidence type="ECO:0000250" key="1"/>
<evidence type="ECO:0000255" key="2"/>
<evidence type="ECO:0000256" key="3">
    <source>
        <dbReference type="SAM" id="MobiDB-lite"/>
    </source>
</evidence>
<evidence type="ECO:0000305" key="4"/>
<dbReference type="EMBL" id="BC125970">
    <property type="protein sequence ID" value="AAI25971.1"/>
    <property type="molecule type" value="mRNA"/>
</dbReference>
<dbReference type="RefSeq" id="NP_001071076.2">
    <property type="nucleotide sequence ID" value="NM_001077608.2"/>
</dbReference>
<dbReference type="SMR" id="A0JMQ7"/>
<dbReference type="STRING" id="7955.ENSDARP00000096667"/>
<dbReference type="PaxDb" id="7955-ENSDARP00000108041"/>
<dbReference type="GeneID" id="563853"/>
<dbReference type="KEGG" id="dre:563853"/>
<dbReference type="AGR" id="ZFIN:ZDB-GENE-061103-409"/>
<dbReference type="CTD" id="563853"/>
<dbReference type="ZFIN" id="ZDB-GENE-061103-409">
    <property type="gene designation" value="mtus1a"/>
</dbReference>
<dbReference type="eggNOG" id="ENOG502QPVG">
    <property type="taxonomic scope" value="Eukaryota"/>
</dbReference>
<dbReference type="InParanoid" id="A0JMQ7"/>
<dbReference type="OrthoDB" id="10038993at2759"/>
<dbReference type="PhylomeDB" id="A0JMQ7"/>
<dbReference type="PRO" id="PR:A0JMQ7"/>
<dbReference type="Proteomes" id="UP000000437">
    <property type="component" value="Alternate scaffold 14"/>
</dbReference>
<dbReference type="Proteomes" id="UP000000437">
    <property type="component" value="Chromosome 14"/>
</dbReference>
<dbReference type="GO" id="GO:0005794">
    <property type="term" value="C:Golgi apparatus"/>
    <property type="evidence" value="ECO:0007669"/>
    <property type="project" value="UniProtKB-SubCell"/>
</dbReference>
<dbReference type="GO" id="GO:0005739">
    <property type="term" value="C:mitochondrion"/>
    <property type="evidence" value="ECO:0007669"/>
    <property type="project" value="UniProtKB-SubCell"/>
</dbReference>
<dbReference type="GO" id="GO:0005634">
    <property type="term" value="C:nucleus"/>
    <property type="evidence" value="ECO:0000318"/>
    <property type="project" value="GO_Central"/>
</dbReference>
<dbReference type="GO" id="GO:0005886">
    <property type="term" value="C:plasma membrane"/>
    <property type="evidence" value="ECO:0007669"/>
    <property type="project" value="UniProtKB-SubCell"/>
</dbReference>
<dbReference type="GO" id="GO:0008017">
    <property type="term" value="F:microtubule binding"/>
    <property type="evidence" value="ECO:0000318"/>
    <property type="project" value="GO_Central"/>
</dbReference>
<dbReference type="Gene3D" id="1.20.120.20">
    <property type="entry name" value="Apolipoprotein"/>
    <property type="match status" value="1"/>
</dbReference>
<dbReference type="InterPro" id="IPR051293">
    <property type="entry name" value="MTUS1/CCDC69"/>
</dbReference>
<dbReference type="PANTHER" id="PTHR24200:SF7">
    <property type="entry name" value="MICROTUBULE-ASSOCIATED TUMOR SUPPRESSOR 1"/>
    <property type="match status" value="1"/>
</dbReference>
<dbReference type="PANTHER" id="PTHR24200">
    <property type="entry name" value="TOUCAN, ISOFORM A"/>
    <property type="match status" value="1"/>
</dbReference>
<dbReference type="SUPFAM" id="SSF58113">
    <property type="entry name" value="Apolipoprotein A-I"/>
    <property type="match status" value="1"/>
</dbReference>
<keyword id="KW-0131">Cell cycle</keyword>
<keyword id="KW-1003">Cell membrane</keyword>
<keyword id="KW-0175">Coiled coil</keyword>
<keyword id="KW-0333">Golgi apparatus</keyword>
<keyword id="KW-0472">Membrane</keyword>
<keyword id="KW-0496">Mitochondrion</keyword>
<keyword id="KW-0539">Nucleus</keyword>
<keyword id="KW-1185">Reference proteome</keyword>
<feature type="chain" id="PRO_0000305201" description="Microtubule-associated tumor suppressor 1 homolog A">
    <location>
        <begin position="1"/>
        <end position="440"/>
    </location>
</feature>
<feature type="region of interest" description="Disordered" evidence="3">
    <location>
        <begin position="44"/>
        <end position="67"/>
    </location>
</feature>
<feature type="region of interest" description="Disordered" evidence="3">
    <location>
        <begin position="407"/>
        <end position="440"/>
    </location>
</feature>
<feature type="coiled-coil region" evidence="2">
    <location>
        <begin position="69"/>
        <end position="401"/>
    </location>
</feature>
<feature type="compositionally biased region" description="Polar residues" evidence="3">
    <location>
        <begin position="417"/>
        <end position="432"/>
    </location>
</feature>
<gene>
    <name type="primary">mtus1a</name>
    <name type="synonym">mtus1</name>
    <name type="ORF">zgc:154168</name>
</gene>
<organism>
    <name type="scientific">Danio rerio</name>
    <name type="common">Zebrafish</name>
    <name type="synonym">Brachydanio rerio</name>
    <dbReference type="NCBI Taxonomy" id="7955"/>
    <lineage>
        <taxon>Eukaryota</taxon>
        <taxon>Metazoa</taxon>
        <taxon>Chordata</taxon>
        <taxon>Craniata</taxon>
        <taxon>Vertebrata</taxon>
        <taxon>Euteleostomi</taxon>
        <taxon>Actinopterygii</taxon>
        <taxon>Neopterygii</taxon>
        <taxon>Teleostei</taxon>
        <taxon>Ostariophysi</taxon>
        <taxon>Cypriniformes</taxon>
        <taxon>Danionidae</taxon>
        <taxon>Danioninae</taxon>
        <taxon>Danio</taxon>
    </lineage>
</organism>
<reference key="1">
    <citation type="submission" date="2006-10" db="EMBL/GenBank/DDBJ databases">
        <authorList>
            <consortium name="NIH - Zebrafish Gene Collection (ZGC) project"/>
        </authorList>
    </citation>
    <scope>NUCLEOTIDE SEQUENCE [LARGE SCALE MRNA]</scope>
</reference>
<comment type="function">
    <text evidence="1">May inhibit cell proliferation.</text>
</comment>
<comment type="subunit">
    <text evidence="1">Homodimer.</text>
</comment>
<comment type="subcellular location">
    <subcellularLocation>
        <location evidence="1">Mitochondrion</location>
    </subcellularLocation>
    <subcellularLocation>
        <location evidence="1">Golgi apparatus</location>
    </subcellularLocation>
    <subcellularLocation>
        <location evidence="1">Cell membrane</location>
    </subcellularLocation>
    <subcellularLocation>
        <location evidence="1">Nucleus</location>
    </subcellularLocation>
</comment>
<comment type="similarity">
    <text evidence="4">Belongs to the MTUS1 family.</text>
</comment>